<dbReference type="EMBL" id="LT708304">
    <property type="protein sequence ID" value="SIU01288.1"/>
    <property type="molecule type" value="Genomic_DNA"/>
</dbReference>
<dbReference type="RefSeq" id="NP_856316.1">
    <property type="nucleotide sequence ID" value="NC_002945.3"/>
</dbReference>
<dbReference type="RefSeq" id="WP_003413654.1">
    <property type="nucleotide sequence ID" value="NC_002945.4"/>
</dbReference>
<dbReference type="KEGG" id="mbo:BQ2027_MB2670"/>
<dbReference type="PATRIC" id="fig|233413.5.peg.2931"/>
<dbReference type="Proteomes" id="UP000001419">
    <property type="component" value="Chromosome"/>
</dbReference>
<dbReference type="GO" id="GO:0005886">
    <property type="term" value="C:plasma membrane"/>
    <property type="evidence" value="ECO:0007669"/>
    <property type="project" value="UniProtKB-SubCell"/>
</dbReference>
<dbReference type="InterPro" id="IPR032818">
    <property type="entry name" value="DedA-like"/>
</dbReference>
<dbReference type="InterPro" id="IPR032816">
    <property type="entry name" value="VTT_dom"/>
</dbReference>
<dbReference type="PANTHER" id="PTHR30353">
    <property type="entry name" value="INNER MEMBRANE PROTEIN DEDA-RELATED"/>
    <property type="match status" value="1"/>
</dbReference>
<dbReference type="PANTHER" id="PTHR30353:SF15">
    <property type="entry name" value="INNER MEMBRANE PROTEIN YABI"/>
    <property type="match status" value="1"/>
</dbReference>
<dbReference type="Pfam" id="PF09335">
    <property type="entry name" value="VTT_dom"/>
    <property type="match status" value="1"/>
</dbReference>
<sequence>MDVEALLQSIPPLMVYLVVGAVVGIESLGIPLPGEIVLVSAAVLSSHPELAVNPIGVGGAAVIGAVVGDSIGYSIGRRFGLPLFDRLGRRFPKHFGPGHVALAERLFNRWGVRAVFLGRFIALLRIFAGPLAGALKMPYPRFLAANVTGGICWAGGTTALVYFAGMAAQHWLERFSWIALVIAVIAGITAAILLRERTSRAIAELEAEHCRKAGTTAA</sequence>
<organism>
    <name type="scientific">Mycobacterium bovis (strain ATCC BAA-935 / AF2122/97)</name>
    <dbReference type="NCBI Taxonomy" id="233413"/>
    <lineage>
        <taxon>Bacteria</taxon>
        <taxon>Bacillati</taxon>
        <taxon>Actinomycetota</taxon>
        <taxon>Actinomycetes</taxon>
        <taxon>Mycobacteriales</taxon>
        <taxon>Mycobacteriaceae</taxon>
        <taxon>Mycobacterium</taxon>
        <taxon>Mycobacterium tuberculosis complex</taxon>
    </lineage>
</organism>
<protein>
    <recommendedName>
        <fullName>Uncharacterized membrane protein Mb2670</fullName>
    </recommendedName>
</protein>
<comment type="subcellular location">
    <subcellularLocation>
        <location evidence="2">Cell membrane</location>
        <topology evidence="2">Multi-pass membrane protein</topology>
    </subcellularLocation>
</comment>
<comment type="similarity">
    <text evidence="2">Belongs to the DedA family.</text>
</comment>
<reference key="1">
    <citation type="journal article" date="2003" name="Proc. Natl. Acad. Sci. U.S.A.">
        <title>The complete genome sequence of Mycobacterium bovis.</title>
        <authorList>
            <person name="Garnier T."/>
            <person name="Eiglmeier K."/>
            <person name="Camus J.-C."/>
            <person name="Medina N."/>
            <person name="Mansoor H."/>
            <person name="Pryor M."/>
            <person name="Duthoy S."/>
            <person name="Grondin S."/>
            <person name="Lacroix C."/>
            <person name="Monsempe C."/>
            <person name="Simon S."/>
            <person name="Harris B."/>
            <person name="Atkin R."/>
            <person name="Doggett J."/>
            <person name="Mayes R."/>
            <person name="Keating L."/>
            <person name="Wheeler P.R."/>
            <person name="Parkhill J."/>
            <person name="Barrell B.G."/>
            <person name="Cole S.T."/>
            <person name="Gordon S.V."/>
            <person name="Hewinson R.G."/>
        </authorList>
    </citation>
    <scope>NUCLEOTIDE SEQUENCE [LARGE SCALE GENOMIC DNA]</scope>
    <source>
        <strain>ATCC BAA-935 / AF2122/97</strain>
    </source>
</reference>
<reference key="2">
    <citation type="journal article" date="2017" name="Genome Announc.">
        <title>Updated reference genome sequence and annotation of Mycobacterium bovis AF2122/97.</title>
        <authorList>
            <person name="Malone K.M."/>
            <person name="Farrell D."/>
            <person name="Stuber T.P."/>
            <person name="Schubert O.T."/>
            <person name="Aebersold R."/>
            <person name="Robbe-Austerman S."/>
            <person name="Gordon S.V."/>
        </authorList>
    </citation>
    <scope>NUCLEOTIDE SEQUENCE [LARGE SCALE GENOMIC DNA]</scope>
    <scope>GENOME REANNOTATION</scope>
    <source>
        <strain>ATCC BAA-935 / AF2122/97</strain>
    </source>
</reference>
<accession>P63912</accession>
<accession>A0A1R3Y268</accession>
<accession>P71936</accession>
<accession>X2BL80</accession>
<feature type="chain" id="PRO_0000161431" description="Uncharacterized membrane protein Mb2670">
    <location>
        <begin position="1"/>
        <end position="218"/>
    </location>
</feature>
<feature type="transmembrane region" description="Helical" evidence="1">
    <location>
        <begin position="10"/>
        <end position="30"/>
    </location>
</feature>
<feature type="transmembrane region" description="Helical" evidence="1">
    <location>
        <begin position="55"/>
        <end position="75"/>
    </location>
</feature>
<feature type="transmembrane region" description="Helical" evidence="1">
    <location>
        <begin position="147"/>
        <end position="167"/>
    </location>
</feature>
<feature type="transmembrane region" description="Helical" evidence="1">
    <location>
        <begin position="175"/>
        <end position="195"/>
    </location>
</feature>
<gene>
    <name type="ordered locus">BQ2027_MB2670</name>
</gene>
<proteinExistence type="inferred from homology"/>
<keyword id="KW-1003">Cell membrane</keyword>
<keyword id="KW-0472">Membrane</keyword>
<keyword id="KW-1185">Reference proteome</keyword>
<keyword id="KW-0812">Transmembrane</keyword>
<keyword id="KW-1133">Transmembrane helix</keyword>
<name>Y2670_MYCBO</name>
<evidence type="ECO:0000255" key="1"/>
<evidence type="ECO:0000305" key="2"/>